<organism>
    <name type="scientific">Human papillomavirus 25</name>
    <dbReference type="NCBI Taxonomy" id="10609"/>
    <lineage>
        <taxon>Viruses</taxon>
        <taxon>Monodnaviria</taxon>
        <taxon>Shotokuvirae</taxon>
        <taxon>Cossaviricota</taxon>
        <taxon>Papovaviricetes</taxon>
        <taxon>Zurhausenvirales</taxon>
        <taxon>Papillomaviridae</taxon>
        <taxon>Firstpapillomavirinae</taxon>
        <taxon>Betapapillomavirus</taxon>
        <taxon>Betapapillomavirus 1</taxon>
    </lineage>
</organism>
<dbReference type="EMBL" id="M96283">
    <property type="protein sequence ID" value="AAA47022.1"/>
    <property type="molecule type" value="Genomic_DNA"/>
</dbReference>
<dbReference type="EMBL" id="X74471">
    <property type="protein sequence ID" value="CAA52529.1"/>
    <property type="molecule type" value="Genomic_DNA"/>
</dbReference>
<dbReference type="EMBL" id="M96289">
    <property type="protein sequence ID" value="AAA47028.1"/>
    <property type="molecule type" value="Genomic_DNA"/>
</dbReference>
<dbReference type="PIR" id="S36496">
    <property type="entry name" value="S36496"/>
</dbReference>
<dbReference type="SMR" id="Q02051"/>
<dbReference type="Proteomes" id="UP000009162">
    <property type="component" value="Genome"/>
</dbReference>
<dbReference type="GO" id="GO:0042025">
    <property type="term" value="C:host cell nucleus"/>
    <property type="evidence" value="ECO:0007669"/>
    <property type="project" value="UniProtKB-SubCell"/>
</dbReference>
<dbReference type="GO" id="GO:0039620">
    <property type="term" value="C:T=7 icosahedral viral capsid"/>
    <property type="evidence" value="ECO:0007669"/>
    <property type="project" value="UniProtKB-UniRule"/>
</dbReference>
<dbReference type="GO" id="GO:0005198">
    <property type="term" value="F:structural molecule activity"/>
    <property type="evidence" value="ECO:0007669"/>
    <property type="project" value="UniProtKB-UniRule"/>
</dbReference>
<dbReference type="GO" id="GO:0075509">
    <property type="term" value="P:endocytosis involved in viral entry into host cell"/>
    <property type="evidence" value="ECO:0007669"/>
    <property type="project" value="UniProtKB-KW"/>
</dbReference>
<dbReference type="GO" id="GO:0019062">
    <property type="term" value="P:virion attachment to host cell"/>
    <property type="evidence" value="ECO:0007669"/>
    <property type="project" value="UniProtKB-UniRule"/>
</dbReference>
<dbReference type="Gene3D" id="2.60.175.20">
    <property type="entry name" value="Major capsid L1 (late) superfamily, Papillomavirus"/>
    <property type="match status" value="2"/>
</dbReference>
<dbReference type="HAMAP" id="MF_04002">
    <property type="entry name" value="PPV_L1"/>
    <property type="match status" value="1"/>
</dbReference>
<dbReference type="InterPro" id="IPR002210">
    <property type="entry name" value="Capsid_L1_Papillomavir"/>
</dbReference>
<dbReference type="InterPro" id="IPR036973">
    <property type="entry name" value="Capsid_L1_sf_Papillomavir"/>
</dbReference>
<dbReference type="InterPro" id="IPR011222">
    <property type="entry name" value="dsDNA_vir_gr_I_capsid"/>
</dbReference>
<dbReference type="Pfam" id="PF00500">
    <property type="entry name" value="Late_protein_L1"/>
    <property type="match status" value="1"/>
</dbReference>
<dbReference type="PRINTS" id="PR00865">
    <property type="entry name" value="HPVCAPSIDL1"/>
</dbReference>
<dbReference type="SUPFAM" id="SSF88648">
    <property type="entry name" value="Group I dsDNA viruses"/>
    <property type="match status" value="1"/>
</dbReference>
<accession>Q02051</accession>
<proteinExistence type="inferred from homology"/>
<sequence>MAVWQAASGKVYLPPSTPVARVQSTDEYVQRTNIYYHAYSDRLLTVGHPYFNVYNVQGSKLQIPKVSGNQHRVFRLKLPDPNRFALADMSVYNPDKERLVWACRGIEIGRGQPLGVGSVGHPLFNKVGDTENPNSYKASSTDDRQNVSFDPKQLQMFIIGCAPCIGEHWDKALPCDDGNIQQGSCPPIELINSVIEDGDMADIGYGNLNFKALQQNRADVSLDIVNETCKYPDFLKMQNDVYGDSCFFYARREQCYARHFFVRGGKTGDDIPAGQIDEGSMKNAFYIPPNSSQAQYNNLGNSMYFPTVSGSLVSSDAQLFNRPFWLQRAQGHNNGICWFNQLFVTVVDNTRNTNFSISINSDGTDVSKITDYNSQKFTEYLRHVEEYELSLILQLCKVPLKAEILAQINAMNSNILEEWQLGFVPAPDNSIQDTYRYIDSLATRCPDKNPPKEKVDPYKNLHFWDVDLTERLSLDLDQYSLGRKFLFQAGLQQTTVNGTKTVSSRISTRGIKRKRKN</sequence>
<comment type="function">
    <text evidence="1">Forms an icosahedral capsid with a T=7 symmetry and a 50 nm diameter. The capsid is composed of 72 pentamers linked to each other by disulfide bonds and associated with L2 proteins. Binds to heparan sulfate proteoglycans on cell surface of basal layer keratinocytes to provide initial virion attachment. This binding mediates a conformational change in the virus capsid that facilitates efficient infection. The virion enters the host cell via endocytosis. During virus trafficking, L1 protein dissociates from the viral DNA and the genomic DNA is released to the host nucleus. The virion assembly takes place within the cell nucleus. Encapsulates the genomic DNA together with protein L2.</text>
</comment>
<comment type="subunit">
    <text evidence="1">Self-assembles into homopentamers. The capsid has an icosahedral symmetry and consists of 72 capsomers, with each capsomer being a pentamer of L1. Interacts with the minor capsid protein L2; this interaction is necessary for viral genome encapsidation. Interacts with protein E2; this interaction enhances E2-dependent replication and transcription activation.</text>
</comment>
<comment type="subcellular location">
    <subcellularLocation>
        <location evidence="1">Virion</location>
    </subcellularLocation>
    <subcellularLocation>
        <location evidence="1">Host nucleus</location>
    </subcellularLocation>
</comment>
<comment type="similarity">
    <text evidence="1">Belongs to the papillomaviridae L1 protein family.</text>
</comment>
<protein>
    <recommendedName>
        <fullName evidence="1">Major capsid protein L1</fullName>
    </recommendedName>
</protein>
<keyword id="KW-0167">Capsid protein</keyword>
<keyword id="KW-1015">Disulfide bond</keyword>
<keyword id="KW-1048">Host nucleus</keyword>
<keyword id="KW-0945">Host-virus interaction</keyword>
<keyword id="KW-0426">Late protein</keyword>
<keyword id="KW-1145">T=7 icosahedral capsid protein</keyword>
<keyword id="KW-1161">Viral attachment to host cell</keyword>
<keyword id="KW-1162">Viral penetration into host cytoplasm</keyword>
<keyword id="KW-0946">Virion</keyword>
<keyword id="KW-1164">Virus endocytosis by host</keyword>
<keyword id="KW-1160">Virus entry into host cell</keyword>
<organismHost>
    <name type="scientific">Homo sapiens</name>
    <name type="common">Human</name>
    <dbReference type="NCBI Taxonomy" id="9606"/>
</organismHost>
<evidence type="ECO:0000255" key="1">
    <source>
        <dbReference type="HAMAP-Rule" id="MF_04002"/>
    </source>
</evidence>
<feature type="chain" id="PRO_0000133509" description="Major capsid protein L1">
    <location>
        <begin position="1"/>
        <end position="517"/>
    </location>
</feature>
<feature type="disulfide bond" description="Interchain (with C-445)" evidence="1">
    <location>
        <position position="175"/>
    </location>
</feature>
<feature type="disulfide bond" description="Interchain (with C-175)" evidence="1">
    <location>
        <position position="445"/>
    </location>
</feature>
<name>VL1_HPV25</name>
<gene>
    <name evidence="1" type="primary">L1</name>
</gene>
<reference key="1">
    <citation type="journal article" date="1994" name="Curr. Top. Microbiol. Immunol.">
        <title>Primer-directed sequencing of human papillomavirus types.</title>
        <authorList>
            <person name="Delius H."/>
            <person name="Hofmann B."/>
        </authorList>
    </citation>
    <scope>NUCLEOTIDE SEQUENCE [GENOMIC DNA]</scope>
</reference>
<reference key="2">
    <citation type="journal article" date="1992" name="J. Virol.">
        <title>Phylogenetic analysis of 48 papillomavirus types and 28 subtypes and variants: a showcase for the molecular evolution of DNA viruses.</title>
        <authorList>
            <person name="Chan S.-Y."/>
            <person name="Bernard H.U."/>
            <person name="Ong C.K."/>
            <person name="Chan S.P."/>
            <person name="Birgit H."/>
            <person name="Delius H."/>
        </authorList>
    </citation>
    <scope>NUCLEOTIDE SEQUENCE [GENOMIC DNA] OF 315-358</scope>
</reference>